<gene>
    <name evidence="1" type="primary">queF</name>
    <name type="ordered locus">XAC3846</name>
</gene>
<keyword id="KW-0963">Cytoplasm</keyword>
<keyword id="KW-0521">NADP</keyword>
<keyword id="KW-0560">Oxidoreductase</keyword>
<keyword id="KW-0671">Queuosine biosynthesis</keyword>
<dbReference type="EC" id="1.7.1.13" evidence="1"/>
<dbReference type="EMBL" id="AE008923">
    <property type="protein sequence ID" value="AAM38688.1"/>
    <property type="molecule type" value="Genomic_DNA"/>
</dbReference>
<dbReference type="RefSeq" id="WP_003484546.1">
    <property type="nucleotide sequence ID" value="NC_003919.1"/>
</dbReference>
<dbReference type="SMR" id="Q8PFX6"/>
<dbReference type="GeneID" id="66912867"/>
<dbReference type="KEGG" id="xac:XAC3846"/>
<dbReference type="eggNOG" id="COG0780">
    <property type="taxonomic scope" value="Bacteria"/>
</dbReference>
<dbReference type="eggNOG" id="COG2904">
    <property type="taxonomic scope" value="Bacteria"/>
</dbReference>
<dbReference type="HOGENOM" id="CLU_054738_0_0_6"/>
<dbReference type="UniPathway" id="UPA00392"/>
<dbReference type="Proteomes" id="UP000000576">
    <property type="component" value="Chromosome"/>
</dbReference>
<dbReference type="GO" id="GO:0005737">
    <property type="term" value="C:cytoplasm"/>
    <property type="evidence" value="ECO:0007669"/>
    <property type="project" value="UniProtKB-SubCell"/>
</dbReference>
<dbReference type="GO" id="GO:0033739">
    <property type="term" value="F:preQ1 synthase activity"/>
    <property type="evidence" value="ECO:0007669"/>
    <property type="project" value="UniProtKB-UniRule"/>
</dbReference>
<dbReference type="GO" id="GO:0008616">
    <property type="term" value="P:queuosine biosynthetic process"/>
    <property type="evidence" value="ECO:0007669"/>
    <property type="project" value="UniProtKB-UniRule"/>
</dbReference>
<dbReference type="GO" id="GO:0006400">
    <property type="term" value="P:tRNA modification"/>
    <property type="evidence" value="ECO:0007669"/>
    <property type="project" value="UniProtKB-UniRule"/>
</dbReference>
<dbReference type="Gene3D" id="3.30.1130.10">
    <property type="match status" value="2"/>
</dbReference>
<dbReference type="HAMAP" id="MF_00817">
    <property type="entry name" value="QueF_type2"/>
    <property type="match status" value="1"/>
</dbReference>
<dbReference type="InterPro" id="IPR043133">
    <property type="entry name" value="GTP-CH-I_C/QueF"/>
</dbReference>
<dbReference type="InterPro" id="IPR050084">
    <property type="entry name" value="NADPH_dep_7-cyano-7-deazaG_red"/>
</dbReference>
<dbReference type="InterPro" id="IPR029500">
    <property type="entry name" value="QueF"/>
</dbReference>
<dbReference type="InterPro" id="IPR029139">
    <property type="entry name" value="QueF_N"/>
</dbReference>
<dbReference type="InterPro" id="IPR016428">
    <property type="entry name" value="QueF_type2"/>
</dbReference>
<dbReference type="NCBIfam" id="TIGR03138">
    <property type="entry name" value="QueF"/>
    <property type="match status" value="1"/>
</dbReference>
<dbReference type="PANTHER" id="PTHR34354">
    <property type="entry name" value="NADPH-DEPENDENT 7-CYANO-7-DEAZAGUANINE REDUCTASE"/>
    <property type="match status" value="1"/>
</dbReference>
<dbReference type="PANTHER" id="PTHR34354:SF1">
    <property type="entry name" value="NADPH-DEPENDENT 7-CYANO-7-DEAZAGUANINE REDUCTASE"/>
    <property type="match status" value="1"/>
</dbReference>
<dbReference type="Pfam" id="PF14489">
    <property type="entry name" value="QueF"/>
    <property type="match status" value="1"/>
</dbReference>
<dbReference type="Pfam" id="PF14819">
    <property type="entry name" value="QueF_N"/>
    <property type="match status" value="1"/>
</dbReference>
<dbReference type="PIRSF" id="PIRSF004750">
    <property type="entry name" value="Nitrile_oxidored_YqcD_prd"/>
    <property type="match status" value="1"/>
</dbReference>
<dbReference type="SUPFAM" id="SSF55620">
    <property type="entry name" value="Tetrahydrobiopterin biosynthesis enzymes-like"/>
    <property type="match status" value="1"/>
</dbReference>
<reference key="1">
    <citation type="journal article" date="2002" name="Nature">
        <title>Comparison of the genomes of two Xanthomonas pathogens with differing host specificities.</title>
        <authorList>
            <person name="da Silva A.C.R."/>
            <person name="Ferro J.A."/>
            <person name="Reinach F.C."/>
            <person name="Farah C.S."/>
            <person name="Furlan L.R."/>
            <person name="Quaggio R.B."/>
            <person name="Monteiro-Vitorello C.B."/>
            <person name="Van Sluys M.A."/>
            <person name="Almeida N.F. Jr."/>
            <person name="Alves L.M.C."/>
            <person name="do Amaral A.M."/>
            <person name="Bertolini M.C."/>
            <person name="Camargo L.E.A."/>
            <person name="Camarotte G."/>
            <person name="Cannavan F."/>
            <person name="Cardozo J."/>
            <person name="Chambergo F."/>
            <person name="Ciapina L.P."/>
            <person name="Cicarelli R.M.B."/>
            <person name="Coutinho L.L."/>
            <person name="Cursino-Santos J.R."/>
            <person name="El-Dorry H."/>
            <person name="Faria J.B."/>
            <person name="Ferreira A.J.S."/>
            <person name="Ferreira R.C.C."/>
            <person name="Ferro M.I.T."/>
            <person name="Formighieri E.F."/>
            <person name="Franco M.C."/>
            <person name="Greggio C.C."/>
            <person name="Gruber A."/>
            <person name="Katsuyama A.M."/>
            <person name="Kishi L.T."/>
            <person name="Leite R.P."/>
            <person name="Lemos E.G.M."/>
            <person name="Lemos M.V.F."/>
            <person name="Locali E.C."/>
            <person name="Machado M.A."/>
            <person name="Madeira A.M.B.N."/>
            <person name="Martinez-Rossi N.M."/>
            <person name="Martins E.C."/>
            <person name="Meidanis J."/>
            <person name="Menck C.F.M."/>
            <person name="Miyaki C.Y."/>
            <person name="Moon D.H."/>
            <person name="Moreira L.M."/>
            <person name="Novo M.T.M."/>
            <person name="Okura V.K."/>
            <person name="Oliveira M.C."/>
            <person name="Oliveira V.R."/>
            <person name="Pereira H.A."/>
            <person name="Rossi A."/>
            <person name="Sena J.A.D."/>
            <person name="Silva C."/>
            <person name="de Souza R.F."/>
            <person name="Spinola L.A.F."/>
            <person name="Takita M.A."/>
            <person name="Tamura R.E."/>
            <person name="Teixeira E.C."/>
            <person name="Tezza R.I.D."/>
            <person name="Trindade dos Santos M."/>
            <person name="Truffi D."/>
            <person name="Tsai S.M."/>
            <person name="White F.F."/>
            <person name="Setubal J.C."/>
            <person name="Kitajima J.P."/>
        </authorList>
    </citation>
    <scope>NUCLEOTIDE SEQUENCE [LARGE SCALE GENOMIC DNA]</scope>
    <source>
        <strain>306</strain>
    </source>
</reference>
<proteinExistence type="inferred from homology"/>
<name>QUEF_XANAC</name>
<comment type="function">
    <text evidence="1">Catalyzes the NADPH-dependent reduction of 7-cyano-7-deazaguanine (preQ0) to 7-aminomethyl-7-deazaguanine (preQ1).</text>
</comment>
<comment type="catalytic activity">
    <reaction evidence="1">
        <text>7-aminomethyl-7-carbaguanine + 2 NADP(+) = 7-cyano-7-deazaguanine + 2 NADPH + 3 H(+)</text>
        <dbReference type="Rhea" id="RHEA:13409"/>
        <dbReference type="ChEBI" id="CHEBI:15378"/>
        <dbReference type="ChEBI" id="CHEBI:45075"/>
        <dbReference type="ChEBI" id="CHEBI:57783"/>
        <dbReference type="ChEBI" id="CHEBI:58349"/>
        <dbReference type="ChEBI" id="CHEBI:58703"/>
        <dbReference type="EC" id="1.7.1.13"/>
    </reaction>
</comment>
<comment type="pathway">
    <text evidence="1">tRNA modification; tRNA-queuosine biosynthesis.</text>
</comment>
<comment type="subunit">
    <text evidence="1">Homodimer.</text>
</comment>
<comment type="subcellular location">
    <subcellularLocation>
        <location evidence="1">Cytoplasm</location>
    </subcellularLocation>
</comment>
<comment type="similarity">
    <text evidence="1">Belongs to the GTP cyclohydrolase I family. QueF type 2 subfamily.</text>
</comment>
<sequence>MNTPEDSTLGREVAYPSGYDPSLLFPIPRAAGRQAIGLTGDLPFIGRDRWHAYELSWLDAQGKPCVATATLHVPCDSPSLIESKSLKLYLNSLNATRFNSAEAVRTRIATDLSTRAGADVAVEFGLPPIDAVGEGESIDALDLSIDDYGPPNAAYLCAHAQPVVEEVLTSALLKSNCPVTGQPDWASVTLRYRGAPIDREGLLRYLVSFRDHAEFHEQCVERIFNDVLTQCAPQWLVVEARYTRRGGLDINPLRSSASVPTPLSIFRDLRQ</sequence>
<organism>
    <name type="scientific">Xanthomonas axonopodis pv. citri (strain 306)</name>
    <dbReference type="NCBI Taxonomy" id="190486"/>
    <lineage>
        <taxon>Bacteria</taxon>
        <taxon>Pseudomonadati</taxon>
        <taxon>Pseudomonadota</taxon>
        <taxon>Gammaproteobacteria</taxon>
        <taxon>Lysobacterales</taxon>
        <taxon>Lysobacteraceae</taxon>
        <taxon>Xanthomonas</taxon>
    </lineage>
</organism>
<accession>Q8PFX6</accession>
<protein>
    <recommendedName>
        <fullName evidence="1">NADPH-dependent 7-cyano-7-deazaguanine reductase</fullName>
        <ecNumber evidence="1">1.7.1.13</ecNumber>
    </recommendedName>
    <alternativeName>
        <fullName evidence="1">7-cyano-7-carbaguanine reductase</fullName>
    </alternativeName>
    <alternativeName>
        <fullName evidence="1">NADPH-dependent nitrile oxidoreductase</fullName>
    </alternativeName>
    <alternativeName>
        <fullName evidence="1">PreQ(0) reductase</fullName>
    </alternativeName>
</protein>
<evidence type="ECO:0000255" key="1">
    <source>
        <dbReference type="HAMAP-Rule" id="MF_00817"/>
    </source>
</evidence>
<feature type="chain" id="PRO_0000163067" description="NADPH-dependent 7-cyano-7-deazaguanine reductase">
    <location>
        <begin position="1"/>
        <end position="271"/>
    </location>
</feature>
<feature type="active site" description="Thioimide intermediate" evidence="1">
    <location>
        <position position="177"/>
    </location>
</feature>
<feature type="active site" description="Proton donor" evidence="1">
    <location>
        <position position="184"/>
    </location>
</feature>
<feature type="binding site" evidence="1">
    <location>
        <begin position="81"/>
        <end position="83"/>
    </location>
    <ligand>
        <name>substrate</name>
    </ligand>
</feature>
<feature type="binding site" evidence="1">
    <location>
        <begin position="83"/>
        <end position="84"/>
    </location>
    <ligand>
        <name>NADPH</name>
        <dbReference type="ChEBI" id="CHEBI:57783"/>
    </ligand>
</feature>
<feature type="binding site" evidence="1">
    <location>
        <begin position="216"/>
        <end position="217"/>
    </location>
    <ligand>
        <name>substrate</name>
    </ligand>
</feature>
<feature type="binding site" evidence="1">
    <location>
        <begin position="245"/>
        <end position="246"/>
    </location>
    <ligand>
        <name>NADPH</name>
        <dbReference type="ChEBI" id="CHEBI:57783"/>
    </ligand>
</feature>